<protein>
    <recommendedName>
        <fullName evidence="1">Ribonuclease Y</fullName>
        <shortName evidence="1">RNase Y</shortName>
        <ecNumber evidence="1">3.1.-.-</ecNumber>
    </recommendedName>
</protein>
<gene>
    <name evidence="1" type="primary">rny</name>
    <name type="ordered locus">Helmi_23040</name>
    <name type="ORF">HM1_2379</name>
</gene>
<dbReference type="EC" id="3.1.-.-" evidence="1"/>
<dbReference type="EMBL" id="CP000930">
    <property type="protein sequence ID" value="ABZ84929.1"/>
    <property type="molecule type" value="Genomic_DNA"/>
</dbReference>
<dbReference type="RefSeq" id="WP_012283426.1">
    <property type="nucleotide sequence ID" value="NC_010337.2"/>
</dbReference>
<dbReference type="SMR" id="B0TII8"/>
<dbReference type="STRING" id="498761.HM1_2379"/>
<dbReference type="KEGG" id="hmo:HM1_2379"/>
<dbReference type="eggNOG" id="COG1418">
    <property type="taxonomic scope" value="Bacteria"/>
</dbReference>
<dbReference type="HOGENOM" id="CLU_028328_1_0_9"/>
<dbReference type="OrthoDB" id="9803205at2"/>
<dbReference type="Proteomes" id="UP000008550">
    <property type="component" value="Chromosome"/>
</dbReference>
<dbReference type="GO" id="GO:0005886">
    <property type="term" value="C:plasma membrane"/>
    <property type="evidence" value="ECO:0007669"/>
    <property type="project" value="UniProtKB-SubCell"/>
</dbReference>
<dbReference type="GO" id="GO:0003723">
    <property type="term" value="F:RNA binding"/>
    <property type="evidence" value="ECO:0007669"/>
    <property type="project" value="UniProtKB-UniRule"/>
</dbReference>
<dbReference type="GO" id="GO:0004521">
    <property type="term" value="F:RNA endonuclease activity"/>
    <property type="evidence" value="ECO:0007669"/>
    <property type="project" value="UniProtKB-UniRule"/>
</dbReference>
<dbReference type="GO" id="GO:0006402">
    <property type="term" value="P:mRNA catabolic process"/>
    <property type="evidence" value="ECO:0007669"/>
    <property type="project" value="UniProtKB-UniRule"/>
</dbReference>
<dbReference type="CDD" id="cd00077">
    <property type="entry name" value="HDc"/>
    <property type="match status" value="1"/>
</dbReference>
<dbReference type="CDD" id="cd22431">
    <property type="entry name" value="KH-I_RNaseY"/>
    <property type="match status" value="1"/>
</dbReference>
<dbReference type="FunFam" id="1.10.3210.10:FF:000003">
    <property type="entry name" value="Ribonuclease Y"/>
    <property type="match status" value="1"/>
</dbReference>
<dbReference type="FunFam" id="3.30.1370.10:FF:000006">
    <property type="entry name" value="Ribonuclease Y"/>
    <property type="match status" value="1"/>
</dbReference>
<dbReference type="Gene3D" id="1.10.3210.10">
    <property type="entry name" value="Hypothetical protein af1432"/>
    <property type="match status" value="1"/>
</dbReference>
<dbReference type="Gene3D" id="3.30.1370.10">
    <property type="entry name" value="K Homology domain, type 1"/>
    <property type="match status" value="1"/>
</dbReference>
<dbReference type="HAMAP" id="MF_00335">
    <property type="entry name" value="RNase_Y"/>
    <property type="match status" value="1"/>
</dbReference>
<dbReference type="InterPro" id="IPR003607">
    <property type="entry name" value="HD/PDEase_dom"/>
</dbReference>
<dbReference type="InterPro" id="IPR006674">
    <property type="entry name" value="HD_domain"/>
</dbReference>
<dbReference type="InterPro" id="IPR006675">
    <property type="entry name" value="HDIG_dom"/>
</dbReference>
<dbReference type="InterPro" id="IPR004087">
    <property type="entry name" value="KH_dom"/>
</dbReference>
<dbReference type="InterPro" id="IPR004088">
    <property type="entry name" value="KH_dom_type_1"/>
</dbReference>
<dbReference type="InterPro" id="IPR036612">
    <property type="entry name" value="KH_dom_type_1_sf"/>
</dbReference>
<dbReference type="InterPro" id="IPR017705">
    <property type="entry name" value="Ribonuclease_Y"/>
</dbReference>
<dbReference type="InterPro" id="IPR022711">
    <property type="entry name" value="RNase_Y_N"/>
</dbReference>
<dbReference type="NCBIfam" id="TIGR00277">
    <property type="entry name" value="HDIG"/>
    <property type="match status" value="1"/>
</dbReference>
<dbReference type="NCBIfam" id="TIGR03319">
    <property type="entry name" value="RNase_Y"/>
    <property type="match status" value="1"/>
</dbReference>
<dbReference type="PANTHER" id="PTHR12826">
    <property type="entry name" value="RIBONUCLEASE Y"/>
    <property type="match status" value="1"/>
</dbReference>
<dbReference type="PANTHER" id="PTHR12826:SF15">
    <property type="entry name" value="RIBONUCLEASE Y"/>
    <property type="match status" value="1"/>
</dbReference>
<dbReference type="Pfam" id="PF01966">
    <property type="entry name" value="HD"/>
    <property type="match status" value="1"/>
</dbReference>
<dbReference type="Pfam" id="PF00013">
    <property type="entry name" value="KH_1"/>
    <property type="match status" value="1"/>
</dbReference>
<dbReference type="Pfam" id="PF12072">
    <property type="entry name" value="RNase_Y_N"/>
    <property type="match status" value="1"/>
</dbReference>
<dbReference type="SMART" id="SM00471">
    <property type="entry name" value="HDc"/>
    <property type="match status" value="1"/>
</dbReference>
<dbReference type="SMART" id="SM00322">
    <property type="entry name" value="KH"/>
    <property type="match status" value="1"/>
</dbReference>
<dbReference type="SUPFAM" id="SSF54791">
    <property type="entry name" value="Eukaryotic type KH-domain (KH-domain type I)"/>
    <property type="match status" value="1"/>
</dbReference>
<dbReference type="SUPFAM" id="SSF109604">
    <property type="entry name" value="HD-domain/PDEase-like"/>
    <property type="match status" value="1"/>
</dbReference>
<dbReference type="PROSITE" id="PS51831">
    <property type="entry name" value="HD"/>
    <property type="match status" value="1"/>
</dbReference>
<dbReference type="PROSITE" id="PS50084">
    <property type="entry name" value="KH_TYPE_1"/>
    <property type="match status" value="1"/>
</dbReference>
<organism>
    <name type="scientific">Heliobacterium modesticaldum (strain ATCC 51547 / Ice1)</name>
    <dbReference type="NCBI Taxonomy" id="498761"/>
    <lineage>
        <taxon>Bacteria</taxon>
        <taxon>Bacillati</taxon>
        <taxon>Bacillota</taxon>
        <taxon>Clostridia</taxon>
        <taxon>Eubacteriales</taxon>
        <taxon>Heliobacteriaceae</taxon>
        <taxon>Heliomicrobium</taxon>
    </lineage>
</organism>
<reference key="1">
    <citation type="journal article" date="2008" name="J. Bacteriol.">
        <title>The genome of Heliobacterium modesticaldum, a phototrophic representative of the Firmicutes containing the simplest photosynthetic apparatus.</title>
        <authorList>
            <person name="Sattley W.M."/>
            <person name="Madigan M.T."/>
            <person name="Swingley W.D."/>
            <person name="Cheung P.C."/>
            <person name="Clocksin K.M."/>
            <person name="Conrad A.L."/>
            <person name="Dejesa L.C."/>
            <person name="Honchak B.M."/>
            <person name="Jung D.O."/>
            <person name="Karbach L.E."/>
            <person name="Kurdoglu A."/>
            <person name="Lahiri S."/>
            <person name="Mastrian S.D."/>
            <person name="Page L.E."/>
            <person name="Taylor H.L."/>
            <person name="Wang Z.T."/>
            <person name="Raymond J."/>
            <person name="Chen M."/>
            <person name="Blankenship R.E."/>
            <person name="Touchman J.W."/>
        </authorList>
    </citation>
    <scope>NUCLEOTIDE SEQUENCE [LARGE SCALE GENOMIC DNA]</scope>
    <source>
        <strain>ATCC 51547 / Ice1</strain>
    </source>
</reference>
<comment type="function">
    <text evidence="1">Endoribonuclease that initiates mRNA decay.</text>
</comment>
<comment type="subcellular location">
    <subcellularLocation>
        <location evidence="1">Cell membrane</location>
        <topology evidence="1">Single-pass membrane protein</topology>
    </subcellularLocation>
</comment>
<comment type="similarity">
    <text evidence="1">Belongs to the RNase Y family.</text>
</comment>
<proteinExistence type="inferred from homology"/>
<accession>B0TII8</accession>
<evidence type="ECO:0000255" key="1">
    <source>
        <dbReference type="HAMAP-Rule" id="MF_00335"/>
    </source>
</evidence>
<evidence type="ECO:0000255" key="2">
    <source>
        <dbReference type="PROSITE-ProRule" id="PRU01175"/>
    </source>
</evidence>
<sequence>MEWIIAGLLAVIAFVGGIFYRKSIAEGKIGSAEDRARQIVDDAVKEAEAKRREAVLAAKDEVHQMRIEAERENRERRNELQRLERRLLQKEESLDRKMESMERKEDNLQRREDEIEKLRAGLAETLQKQVAELERLSGLTSEEARTLLLSNIEDEVKHEAAMMIKTIENQAKEEAEKRAREIISLAIQRCAADHVAESTVSVVALPNDEMKGRIIGREGRNIRTLETLTGIDLIIDDTPEAVILSGFDPIRREVARIALEKLILDGRIHPARIEEMVEKAQKEVETRIREEGEQATFETGIHGLHPELIKLLGRLRWRTSYGQNVLKHSIEVAHLAGLMAAELGADPILARRAGLLHDIGKAVDHEMEGNHVSIGIDLAKKYRESREVIHCIAAHHGDEEPRTIEAVLVAAADAVSAARPGARRETLESYIKRLQKLEEIADSFEGVEKAFAIQAGREIRIMVKPDKVDDAESLRVAREIVKRIESELEYPGQIKVVVIRETRAVDYAK</sequence>
<keyword id="KW-1003">Cell membrane</keyword>
<keyword id="KW-0255">Endonuclease</keyword>
<keyword id="KW-0378">Hydrolase</keyword>
<keyword id="KW-0472">Membrane</keyword>
<keyword id="KW-0540">Nuclease</keyword>
<keyword id="KW-1185">Reference proteome</keyword>
<keyword id="KW-0694">RNA-binding</keyword>
<keyword id="KW-0812">Transmembrane</keyword>
<keyword id="KW-1133">Transmembrane helix</keyword>
<feature type="chain" id="PRO_0000344887" description="Ribonuclease Y">
    <location>
        <begin position="1"/>
        <end position="509"/>
    </location>
</feature>
<feature type="transmembrane region" description="Helical" evidence="1">
    <location>
        <begin position="1"/>
        <end position="21"/>
    </location>
</feature>
<feature type="domain" description="KH" evidence="1">
    <location>
        <begin position="199"/>
        <end position="262"/>
    </location>
</feature>
<feature type="domain" description="HD" evidence="2">
    <location>
        <begin position="325"/>
        <end position="418"/>
    </location>
</feature>
<name>RNY_HELMI</name>